<dbReference type="PIR" id="A61434">
    <property type="entry name" value="A61434"/>
</dbReference>
<dbReference type="SMR" id="P41329"/>
<dbReference type="GO" id="GO:0072562">
    <property type="term" value="C:blood microparticle"/>
    <property type="evidence" value="ECO:0007669"/>
    <property type="project" value="TreeGrafter"/>
</dbReference>
<dbReference type="GO" id="GO:0031838">
    <property type="term" value="C:haptoglobin-hemoglobin complex"/>
    <property type="evidence" value="ECO:0007669"/>
    <property type="project" value="TreeGrafter"/>
</dbReference>
<dbReference type="GO" id="GO:0005833">
    <property type="term" value="C:hemoglobin complex"/>
    <property type="evidence" value="ECO:0007669"/>
    <property type="project" value="InterPro"/>
</dbReference>
<dbReference type="GO" id="GO:0031720">
    <property type="term" value="F:haptoglobin binding"/>
    <property type="evidence" value="ECO:0007669"/>
    <property type="project" value="TreeGrafter"/>
</dbReference>
<dbReference type="GO" id="GO:0020037">
    <property type="term" value="F:heme binding"/>
    <property type="evidence" value="ECO:0007669"/>
    <property type="project" value="InterPro"/>
</dbReference>
<dbReference type="GO" id="GO:0005506">
    <property type="term" value="F:iron ion binding"/>
    <property type="evidence" value="ECO:0007669"/>
    <property type="project" value="InterPro"/>
</dbReference>
<dbReference type="GO" id="GO:0043177">
    <property type="term" value="F:organic acid binding"/>
    <property type="evidence" value="ECO:0007669"/>
    <property type="project" value="TreeGrafter"/>
</dbReference>
<dbReference type="GO" id="GO:0019825">
    <property type="term" value="F:oxygen binding"/>
    <property type="evidence" value="ECO:0007669"/>
    <property type="project" value="InterPro"/>
</dbReference>
<dbReference type="GO" id="GO:0005344">
    <property type="term" value="F:oxygen carrier activity"/>
    <property type="evidence" value="ECO:0007669"/>
    <property type="project" value="UniProtKB-KW"/>
</dbReference>
<dbReference type="GO" id="GO:0004601">
    <property type="term" value="F:peroxidase activity"/>
    <property type="evidence" value="ECO:0007669"/>
    <property type="project" value="TreeGrafter"/>
</dbReference>
<dbReference type="GO" id="GO:0042744">
    <property type="term" value="P:hydrogen peroxide catabolic process"/>
    <property type="evidence" value="ECO:0007669"/>
    <property type="project" value="TreeGrafter"/>
</dbReference>
<dbReference type="CDD" id="cd08927">
    <property type="entry name" value="Hb-alpha-like"/>
    <property type="match status" value="1"/>
</dbReference>
<dbReference type="FunFam" id="1.10.490.10:FF:000002">
    <property type="entry name" value="Hemoglobin subunit alpha"/>
    <property type="match status" value="1"/>
</dbReference>
<dbReference type="Gene3D" id="1.10.490.10">
    <property type="entry name" value="Globins"/>
    <property type="match status" value="1"/>
</dbReference>
<dbReference type="InterPro" id="IPR000971">
    <property type="entry name" value="Globin"/>
</dbReference>
<dbReference type="InterPro" id="IPR009050">
    <property type="entry name" value="Globin-like_sf"/>
</dbReference>
<dbReference type="InterPro" id="IPR012292">
    <property type="entry name" value="Globin/Proto"/>
</dbReference>
<dbReference type="InterPro" id="IPR002338">
    <property type="entry name" value="Hemoglobin_a-typ"/>
</dbReference>
<dbReference type="InterPro" id="IPR050056">
    <property type="entry name" value="Hemoglobin_oxygen_transport"/>
</dbReference>
<dbReference type="InterPro" id="IPR002339">
    <property type="entry name" value="Hemoglobin_pi"/>
</dbReference>
<dbReference type="PANTHER" id="PTHR11442">
    <property type="entry name" value="HEMOGLOBIN FAMILY MEMBER"/>
    <property type="match status" value="1"/>
</dbReference>
<dbReference type="PANTHER" id="PTHR11442:SF48">
    <property type="entry name" value="HEMOGLOBIN SUBUNIT ALPHA"/>
    <property type="match status" value="1"/>
</dbReference>
<dbReference type="Pfam" id="PF00042">
    <property type="entry name" value="Globin"/>
    <property type="match status" value="1"/>
</dbReference>
<dbReference type="PRINTS" id="PR00612">
    <property type="entry name" value="ALPHAHAEM"/>
</dbReference>
<dbReference type="PRINTS" id="PR00815">
    <property type="entry name" value="PIHAEM"/>
</dbReference>
<dbReference type="SUPFAM" id="SSF46458">
    <property type="entry name" value="Globin-like"/>
    <property type="match status" value="1"/>
</dbReference>
<dbReference type="PROSITE" id="PS01033">
    <property type="entry name" value="GLOBIN"/>
    <property type="match status" value="1"/>
</dbReference>
<evidence type="ECO:0000250" key="1">
    <source>
        <dbReference type="UniProtKB" id="P0CH25"/>
    </source>
</evidence>
<evidence type="ECO:0000255" key="2">
    <source>
        <dbReference type="PROSITE-ProRule" id="PRU00238"/>
    </source>
</evidence>
<organism>
    <name type="scientific">Arctocephalus galapagoensis</name>
    <name type="common">Galapagoes fur seal</name>
    <name type="synonym">Arctocephalus australis galapagoensis</name>
    <dbReference type="NCBI Taxonomy" id="30584"/>
    <lineage>
        <taxon>Eukaryota</taxon>
        <taxon>Metazoa</taxon>
        <taxon>Chordata</taxon>
        <taxon>Craniata</taxon>
        <taxon>Vertebrata</taxon>
        <taxon>Euteleostomi</taxon>
        <taxon>Mammalia</taxon>
        <taxon>Eutheria</taxon>
        <taxon>Laurasiatheria</taxon>
        <taxon>Carnivora</taxon>
        <taxon>Caniformia</taxon>
        <taxon>Pinnipedia</taxon>
        <taxon>Otariidae</taxon>
        <taxon>Arctocephalus</taxon>
    </lineage>
</organism>
<name>HBA1_ARCGA</name>
<comment type="function">
    <text>Involved in oxygen transport from the lung to the various peripheral tissues.</text>
</comment>
<comment type="subunit">
    <text>Heterotetramer of two alpha chains and two beta chains.</text>
</comment>
<comment type="tissue specificity">
    <text>Red blood cells.</text>
</comment>
<comment type="similarity">
    <text evidence="2">Belongs to the globin family.</text>
</comment>
<reference key="1">
    <citation type="journal article" date="1991" name="J. Protein Chem.">
        <title>The complete primary structure of the marine Carnivora, galapagoes fur seal (Arctocephalus galapagoensis, Otariidae) hemoglobins.</title>
        <authorList>
            <person name="Jahan M."/>
            <person name="Ahmed A."/>
            <person name="Trillmich F."/>
            <person name="Braunitzer G."/>
        </authorList>
    </citation>
    <scope>PROTEIN SEQUENCE OF 2-142</scope>
</reference>
<accession>P41329</accession>
<sequence length="142" mass="15499">MVLSPADKTNIKTTWDKLGGHAGEYGGEALERTFMSFPTTKTYFPHFDLSPGSAQVKAHGKKVADALTTAVAHMDDLPKALSALSDLHAYKLRVDPVNFKLLSHCLLVTLACHHPAEFTPAVHASLDKFFSTVSTVLTSKYR</sequence>
<proteinExistence type="evidence at protein level"/>
<feature type="initiator methionine" description="Removed" evidence="1">
    <location>
        <position position="1"/>
    </location>
</feature>
<feature type="chain" id="PRO_0000052559" description="Hemoglobin subunit alpha-1">
    <location>
        <begin position="2"/>
        <end position="142"/>
    </location>
</feature>
<feature type="domain" description="Globin" evidence="2">
    <location>
        <begin position="2"/>
        <end position="142"/>
    </location>
</feature>
<feature type="binding site" evidence="2">
    <location>
        <position position="59"/>
    </location>
    <ligand>
        <name>O2</name>
        <dbReference type="ChEBI" id="CHEBI:15379"/>
    </ligand>
</feature>
<feature type="binding site" description="proximal binding residue" evidence="2">
    <location>
        <position position="88"/>
    </location>
    <ligand>
        <name>heme b</name>
        <dbReference type="ChEBI" id="CHEBI:60344"/>
    </ligand>
    <ligandPart>
        <name>Fe</name>
        <dbReference type="ChEBI" id="CHEBI:18248"/>
    </ligandPart>
</feature>
<protein>
    <recommendedName>
        <fullName>Hemoglobin subunit alpha-1</fullName>
    </recommendedName>
    <alternativeName>
        <fullName>Alpha-1-globin</fullName>
    </alternativeName>
    <alternativeName>
        <fullName>Hemoglobin alpha-1 chain</fullName>
    </alternativeName>
    <alternativeName>
        <fullName>Hemoglobin alpha-I chain</fullName>
    </alternativeName>
</protein>
<keyword id="KW-0903">Direct protein sequencing</keyword>
<keyword id="KW-0349">Heme</keyword>
<keyword id="KW-0408">Iron</keyword>
<keyword id="KW-0479">Metal-binding</keyword>
<keyword id="KW-0561">Oxygen transport</keyword>
<keyword id="KW-0813">Transport</keyword>